<proteinExistence type="evidence at protein level"/>
<accession>Q99MV7</accession>
<accession>Q3T4H2</accession>
<accession>Q3T4H3</accession>
<accession>Q4FZG6</accession>
<accession>Q8CDR4</accession>
<accession>Q9QXQ2</accession>
<comment type="function">
    <text evidence="4 5">Seems to be involved in regulation of transcriptional activity of MYC. In vitro, inhibits DNA-binding activity of Mad-MAX heterodimers. Can recruit Mad transcriptional repressors (MXD1, MXD3, MXD4 and MXI1) to the cytoplasm. May be involved in spermiogenesis.</text>
</comment>
<comment type="subunit">
    <text evidence="4 7">Interacts with MXD1, MXD3, MXD4, MXI1 and PIWIL1. Self-associates.</text>
</comment>
<comment type="subcellular location">
    <subcellularLocation>
        <location>Cytoplasm</location>
    </subcellularLocation>
    <subcellularLocation>
        <location>Nucleus</location>
    </subcellularLocation>
    <text>Predominantly found in the cytoplasm. Component of a nuage in male germ cells (an electron-dense spherical cytoplasmic body present in late pachytene and diplotene spermatocytes and in elonging spermatids).</text>
</comment>
<comment type="alternative products">
    <event type="alternative splicing"/>
    <isoform>
        <id>Q99MV7-1</id>
        <name>1</name>
        <name>RNF17L</name>
        <sequence type="displayed"/>
    </isoform>
    <isoform>
        <id>Q99MV7-2</id>
        <name>2</name>
        <name>RNF17S</name>
        <sequence type="described" ref="VSP_033080 VSP_033081"/>
    </isoform>
    <isoform>
        <id>Q99MV7-3</id>
        <name>3</name>
        <sequence type="described" ref="VSP_033077"/>
    </isoform>
    <isoform>
        <id>Q99MV7-4</id>
        <name>4</name>
        <sequence type="described" ref="VSP_033078 VSP_033079"/>
    </isoform>
</comment>
<comment type="tissue specificity">
    <text evidence="4 6">Expressed at high levels in adult testis. Expressed in male germ cells (at protein level). Expressed at lower levels in adult thyroid, submaxillary gland, ovary and epididymis.</text>
</comment>
<comment type="disruption phenotype">
    <text evidence="6">Male mice are sterile, exhibit a complete arrest in round spermatids and fail to produce sperm.</text>
</comment>
<comment type="miscellaneous">
    <molecule>Isoform 2</molecule>
    <text evidence="12">Major.</text>
</comment>
<comment type="sequence caution" evidence="12">
    <conflict type="frameshift">
        <sequence resource="EMBL-CDS" id="AAF01336"/>
    </conflict>
</comment>
<protein>
    <recommendedName>
        <fullName>RING finger protein 17</fullName>
    </recommendedName>
    <alternativeName>
        <fullName>Mad member-interacting protein 2</fullName>
        <shortName>Mmip-2</shortName>
    </alternativeName>
</protein>
<feature type="chain" id="PRO_0000056060" description="RING finger protein 17">
    <location>
        <begin position="1"/>
        <end position="1640"/>
    </location>
</feature>
<feature type="domain" description="Tudor 1" evidence="2">
    <location>
        <begin position="751"/>
        <end position="809"/>
    </location>
</feature>
<feature type="domain" description="Tudor 2" evidence="2">
    <location>
        <begin position="985"/>
        <end position="1044"/>
    </location>
</feature>
<feature type="domain" description="Tudor 3" evidence="2">
    <location>
        <begin position="1246"/>
        <end position="1303"/>
    </location>
</feature>
<feature type="domain" description="Tudor 4" evidence="2">
    <location>
        <begin position="1496"/>
        <end position="1556"/>
    </location>
</feature>
<feature type="zinc finger region" description="RING-type" evidence="1">
    <location>
        <begin position="30"/>
        <end position="73"/>
    </location>
</feature>
<feature type="region of interest" description="Disordered" evidence="3">
    <location>
        <begin position="348"/>
        <end position="376"/>
    </location>
</feature>
<feature type="region of interest" description="Disordered" evidence="3">
    <location>
        <begin position="413"/>
        <end position="435"/>
    </location>
</feature>
<feature type="region of interest" description="Disordered" evidence="3">
    <location>
        <begin position="1170"/>
        <end position="1191"/>
    </location>
</feature>
<feature type="compositionally biased region" description="Basic and acidic residues" evidence="3">
    <location>
        <begin position="360"/>
        <end position="373"/>
    </location>
</feature>
<feature type="compositionally biased region" description="Basic and acidic residues" evidence="3">
    <location>
        <begin position="1170"/>
        <end position="1184"/>
    </location>
</feature>
<feature type="modified residue" description="Phosphoserine" evidence="13">
    <location>
        <position position="134"/>
    </location>
</feature>
<feature type="modified residue" description="N6-acetyllysine" evidence="14">
    <location>
        <position position="229"/>
    </location>
</feature>
<feature type="splice variant" id="VSP_033077" description="In isoform 3." evidence="11">
    <location>
        <begin position="1"/>
        <end position="580"/>
    </location>
</feature>
<feature type="splice variant" id="VSP_033078" description="In isoform 4." evidence="8">
    <original>TEGWEKEAKVEFLKM</original>
    <variation>VSERESDSPSKAVEF</variation>
    <location>
        <begin position="612"/>
        <end position="626"/>
    </location>
</feature>
<feature type="splice variant" id="VSP_033079" description="In isoform 4." evidence="8">
    <location>
        <begin position="627"/>
        <end position="1640"/>
    </location>
</feature>
<feature type="splice variant" id="VSP_033080" description="In isoform 2." evidence="9 10">
    <original>VSK</original>
    <variation>ASS</variation>
    <location>
        <begin position="1127"/>
        <end position="1129"/>
    </location>
</feature>
<feature type="splice variant" id="VSP_033081" description="In isoform 2." evidence="9 10">
    <location>
        <begin position="1130"/>
        <end position="1640"/>
    </location>
</feature>
<feature type="sequence conflict" description="In Ref. 3; AAF01336." evidence="12" ref="3">
    <original>S</original>
    <variation>SGAQ</variation>
    <location>
        <position position="20"/>
    </location>
</feature>
<feature type="sequence conflict" description="In Ref. 3; AAF01336." evidence="12" ref="3">
    <original>Q</original>
    <variation>S</variation>
    <location>
        <position position="23"/>
    </location>
</feature>
<feature type="sequence conflict" description="In Ref. 3; AAF01336." evidence="12" ref="3">
    <original>R</original>
    <variation>E</variation>
    <location>
        <position position="282"/>
    </location>
</feature>
<feature type="sequence conflict" description="In Ref. 3; AAF01336." evidence="12" ref="3">
    <original>K</original>
    <variation>P</variation>
    <location>
        <position position="307"/>
    </location>
</feature>
<feature type="sequence conflict" description="In Ref. 3; AAF01336." evidence="12" ref="3">
    <original>Q</original>
    <variation>L</variation>
    <location>
        <position position="311"/>
    </location>
</feature>
<name>RNF17_MOUSE</name>
<evidence type="ECO:0000255" key="1">
    <source>
        <dbReference type="PROSITE-ProRule" id="PRU00175"/>
    </source>
</evidence>
<evidence type="ECO:0000255" key="2">
    <source>
        <dbReference type="PROSITE-ProRule" id="PRU00211"/>
    </source>
</evidence>
<evidence type="ECO:0000256" key="3">
    <source>
        <dbReference type="SAM" id="MobiDB-lite"/>
    </source>
</evidence>
<evidence type="ECO:0000269" key="4">
    <source>
    </source>
</evidence>
<evidence type="ECO:0000269" key="5">
    <source>
    </source>
</evidence>
<evidence type="ECO:0000269" key="6">
    <source>
    </source>
</evidence>
<evidence type="ECO:0000269" key="7">
    <source>
    </source>
</evidence>
<evidence type="ECO:0000303" key="8">
    <source>
    </source>
</evidence>
<evidence type="ECO:0000303" key="9">
    <source>
    </source>
</evidence>
<evidence type="ECO:0000303" key="10">
    <source>
    </source>
</evidence>
<evidence type="ECO:0000303" key="11">
    <source>
    </source>
</evidence>
<evidence type="ECO:0000305" key="12"/>
<evidence type="ECO:0007744" key="13">
    <source>
    </source>
</evidence>
<evidence type="ECO:0007744" key="14">
    <source>
    </source>
</evidence>
<dbReference type="EMBL" id="AF285585">
    <property type="protein sequence ID" value="AAK31964.1"/>
    <property type="molecule type" value="mRNA"/>
</dbReference>
<dbReference type="EMBL" id="AY854010">
    <property type="protein sequence ID" value="AAX51690.1"/>
    <property type="molecule type" value="mRNA"/>
</dbReference>
<dbReference type="EMBL" id="AY854011">
    <property type="protein sequence ID" value="AAX51691.1"/>
    <property type="molecule type" value="mRNA"/>
</dbReference>
<dbReference type="EMBL" id="AF190166">
    <property type="protein sequence ID" value="AAF01336.1"/>
    <property type="status" value="ALT_FRAME"/>
    <property type="molecule type" value="mRNA"/>
</dbReference>
<dbReference type="EMBL" id="AK029693">
    <property type="protein sequence ID" value="BAC26567.1"/>
    <property type="molecule type" value="mRNA"/>
</dbReference>
<dbReference type="EMBL" id="BC099501">
    <property type="protein sequence ID" value="AAH99501.1"/>
    <property type="molecule type" value="mRNA"/>
</dbReference>
<dbReference type="CCDS" id="CCDS27149.1">
    <molecule id="Q99MV7-1"/>
</dbReference>
<dbReference type="RefSeq" id="NP_001028215.1">
    <molecule id="Q99MV7-1"/>
    <property type="nucleotide sequence ID" value="NM_001033043.1"/>
</dbReference>
<dbReference type="RefSeq" id="XP_006519173.1">
    <property type="nucleotide sequence ID" value="XM_006519110.3"/>
</dbReference>
<dbReference type="RefSeq" id="XP_006519175.1">
    <molecule id="Q99MV7-3"/>
    <property type="nucleotide sequence ID" value="XM_006519112.1"/>
</dbReference>
<dbReference type="RefSeq" id="XP_017171542.1">
    <property type="nucleotide sequence ID" value="XM_017316053.1"/>
</dbReference>
<dbReference type="SMR" id="Q99MV7"/>
<dbReference type="BioGRID" id="205956">
    <property type="interactions" value="3"/>
</dbReference>
<dbReference type="FunCoup" id="Q99MV7">
    <property type="interactions" value="643"/>
</dbReference>
<dbReference type="IntAct" id="Q99MV7">
    <property type="interactions" value="2"/>
</dbReference>
<dbReference type="MINT" id="Q99MV7"/>
<dbReference type="STRING" id="10090.ENSMUSP00000093469"/>
<dbReference type="iPTMnet" id="Q99MV7"/>
<dbReference type="PhosphoSitePlus" id="Q99MV7"/>
<dbReference type="SwissPalm" id="Q99MV7"/>
<dbReference type="PaxDb" id="10090-ENSMUSP00000093469"/>
<dbReference type="PeptideAtlas" id="Q99MV7"/>
<dbReference type="ProteomicsDB" id="300495">
    <molecule id="Q99MV7-1"/>
</dbReference>
<dbReference type="ProteomicsDB" id="300496">
    <molecule id="Q99MV7-2"/>
</dbReference>
<dbReference type="ProteomicsDB" id="300497">
    <molecule id="Q99MV7-3"/>
</dbReference>
<dbReference type="ProteomicsDB" id="300498">
    <molecule id="Q99MV7-4"/>
</dbReference>
<dbReference type="Antibodypedia" id="22496">
    <property type="antibodies" value="71 antibodies from 18 providers"/>
</dbReference>
<dbReference type="Ensembl" id="ENSMUST00000095793.3">
    <molecule id="Q99MV7-1"/>
    <property type="protein sequence ID" value="ENSMUSP00000093469.2"/>
    <property type="gene ID" value="ENSMUSG00000000365.10"/>
</dbReference>
<dbReference type="Ensembl" id="ENSMUST00000223627.2">
    <molecule id="Q99MV7-4"/>
    <property type="protein sequence ID" value="ENSMUSP00000153222.2"/>
    <property type="gene ID" value="ENSMUSG00000000365.10"/>
</dbReference>
<dbReference type="GeneID" id="30054"/>
<dbReference type="KEGG" id="mmu:30054"/>
<dbReference type="UCSC" id="uc007ubx.1">
    <molecule id="Q99MV7-4"/>
    <property type="organism name" value="mouse"/>
</dbReference>
<dbReference type="UCSC" id="uc007ubz.1">
    <molecule id="Q99MV7-2"/>
    <property type="organism name" value="mouse"/>
</dbReference>
<dbReference type="UCSC" id="uc007uca.1">
    <molecule id="Q99MV7-1"/>
    <property type="organism name" value="mouse"/>
</dbReference>
<dbReference type="UCSC" id="uc011zma.1">
    <molecule id="Q99MV7-3"/>
    <property type="organism name" value="mouse"/>
</dbReference>
<dbReference type="AGR" id="MGI:1353419"/>
<dbReference type="CTD" id="56163"/>
<dbReference type="MGI" id="MGI:1353419">
    <property type="gene designation" value="Rnf17"/>
</dbReference>
<dbReference type="VEuPathDB" id="HostDB:ENSMUSG00000000365"/>
<dbReference type="eggNOG" id="KOG2039">
    <property type="taxonomic scope" value="Eukaryota"/>
</dbReference>
<dbReference type="eggNOG" id="KOG2279">
    <property type="taxonomic scope" value="Eukaryota"/>
</dbReference>
<dbReference type="GeneTree" id="ENSGT00940000157559"/>
<dbReference type="HOGENOM" id="CLU_003202_1_0_1"/>
<dbReference type="InParanoid" id="Q99MV7"/>
<dbReference type="OMA" id="HCAVKVP"/>
<dbReference type="OrthoDB" id="5800423at2759"/>
<dbReference type="PhylomeDB" id="Q99MV7"/>
<dbReference type="BioGRID-ORCS" id="30054">
    <property type="hits" value="5 hits in 85 CRISPR screens"/>
</dbReference>
<dbReference type="CD-CODE" id="DE1E139C">
    <property type="entry name" value="Chromatoid body"/>
</dbReference>
<dbReference type="ChiTaRS" id="Rnf17">
    <property type="organism name" value="mouse"/>
</dbReference>
<dbReference type="PRO" id="PR:Q99MV7"/>
<dbReference type="Proteomes" id="UP000000589">
    <property type="component" value="Chromosome 14"/>
</dbReference>
<dbReference type="RNAct" id="Q99MV7">
    <property type="molecule type" value="protein"/>
</dbReference>
<dbReference type="Bgee" id="ENSMUSG00000000365">
    <property type="expression patterns" value="Expressed in spermatocyte and 69 other cell types or tissues"/>
</dbReference>
<dbReference type="ExpressionAtlas" id="Q99MV7">
    <property type="expression patterns" value="baseline and differential"/>
</dbReference>
<dbReference type="GO" id="GO:0005737">
    <property type="term" value="C:cytoplasm"/>
    <property type="evidence" value="ECO:0000314"/>
    <property type="project" value="MGI"/>
</dbReference>
<dbReference type="GO" id="GO:0005634">
    <property type="term" value="C:nucleus"/>
    <property type="evidence" value="ECO:0007669"/>
    <property type="project" value="UniProtKB-SubCell"/>
</dbReference>
<dbReference type="GO" id="GO:0042802">
    <property type="term" value="F:identical protein binding"/>
    <property type="evidence" value="ECO:0000353"/>
    <property type="project" value="MGI"/>
</dbReference>
<dbReference type="GO" id="GO:0008270">
    <property type="term" value="F:zinc ion binding"/>
    <property type="evidence" value="ECO:0007669"/>
    <property type="project" value="UniProtKB-KW"/>
</dbReference>
<dbReference type="GO" id="GO:0007286">
    <property type="term" value="P:spermatid development"/>
    <property type="evidence" value="ECO:0000315"/>
    <property type="project" value="MGI"/>
</dbReference>
<dbReference type="CDD" id="cd20414">
    <property type="entry name" value="Tudor_TDRD4_rpt1"/>
    <property type="match status" value="1"/>
</dbReference>
<dbReference type="CDD" id="cd20415">
    <property type="entry name" value="Tudor_TDRD4_rpt2"/>
    <property type="match status" value="1"/>
</dbReference>
<dbReference type="CDD" id="cd20416">
    <property type="entry name" value="Tudor_TDRD4_rpt3"/>
    <property type="match status" value="1"/>
</dbReference>
<dbReference type="CDD" id="cd20417">
    <property type="entry name" value="Tudor_TDRD4_rpt4"/>
    <property type="match status" value="1"/>
</dbReference>
<dbReference type="CDD" id="cd20418">
    <property type="entry name" value="Tudor_TDRD4_rpt5"/>
    <property type="match status" value="1"/>
</dbReference>
<dbReference type="FunFam" id="2.30.30.140:FF:000114">
    <property type="entry name" value="RING finger protein 17"/>
    <property type="match status" value="1"/>
</dbReference>
<dbReference type="Gene3D" id="2.30.30.140">
    <property type="match status" value="4"/>
</dbReference>
<dbReference type="Gene3D" id="2.40.50.90">
    <property type="match status" value="3"/>
</dbReference>
<dbReference type="InterPro" id="IPR047845">
    <property type="entry name" value="RNF17-like_TUDOR_rpt1"/>
</dbReference>
<dbReference type="InterPro" id="IPR047847">
    <property type="entry name" value="RNF17-like_TUDOR_rpt2"/>
</dbReference>
<dbReference type="InterPro" id="IPR047848">
    <property type="entry name" value="RNF17-like_TUDOR_rpt3"/>
</dbReference>
<dbReference type="InterPro" id="IPR047849">
    <property type="entry name" value="RNF17-like_TUDOR_rpt4"/>
</dbReference>
<dbReference type="InterPro" id="IPR047850">
    <property type="entry name" value="RNF17-like_TUDOR_rpt5"/>
</dbReference>
<dbReference type="InterPro" id="IPR035437">
    <property type="entry name" value="SNase_OB-fold_sf"/>
</dbReference>
<dbReference type="InterPro" id="IPR002999">
    <property type="entry name" value="Tudor"/>
</dbReference>
<dbReference type="InterPro" id="IPR001841">
    <property type="entry name" value="Znf_RING"/>
</dbReference>
<dbReference type="InterPro" id="IPR017907">
    <property type="entry name" value="Znf_RING_CS"/>
</dbReference>
<dbReference type="PANTHER" id="PTHR16442">
    <property type="entry name" value="RING FINGER PROTEIN 17"/>
    <property type="match status" value="1"/>
</dbReference>
<dbReference type="PANTHER" id="PTHR16442:SF1">
    <property type="entry name" value="RING FINGER PROTEIN 17"/>
    <property type="match status" value="1"/>
</dbReference>
<dbReference type="Pfam" id="PF00567">
    <property type="entry name" value="TUDOR"/>
    <property type="match status" value="5"/>
</dbReference>
<dbReference type="SMART" id="SM00333">
    <property type="entry name" value="TUDOR"/>
    <property type="match status" value="4"/>
</dbReference>
<dbReference type="SUPFAM" id="SSF50199">
    <property type="entry name" value="Staphylococcal nuclease"/>
    <property type="match status" value="1"/>
</dbReference>
<dbReference type="SUPFAM" id="SSF63748">
    <property type="entry name" value="Tudor/PWWP/MBT"/>
    <property type="match status" value="5"/>
</dbReference>
<dbReference type="PROSITE" id="PS50304">
    <property type="entry name" value="TUDOR"/>
    <property type="match status" value="4"/>
</dbReference>
<dbReference type="PROSITE" id="PS00518">
    <property type="entry name" value="ZF_RING_1"/>
    <property type="match status" value="1"/>
</dbReference>
<dbReference type="PROSITE" id="PS50089">
    <property type="entry name" value="ZF_RING_2"/>
    <property type="match status" value="1"/>
</dbReference>
<gene>
    <name type="primary">Rnf17</name>
</gene>
<keyword id="KW-0007">Acetylation</keyword>
<keyword id="KW-0025">Alternative splicing</keyword>
<keyword id="KW-0963">Cytoplasm</keyword>
<keyword id="KW-0217">Developmental protein</keyword>
<keyword id="KW-0221">Differentiation</keyword>
<keyword id="KW-0479">Metal-binding</keyword>
<keyword id="KW-0539">Nucleus</keyword>
<keyword id="KW-0597">Phosphoprotein</keyword>
<keyword id="KW-1185">Reference proteome</keyword>
<keyword id="KW-0677">Repeat</keyword>
<keyword id="KW-0744">Spermatogenesis</keyword>
<keyword id="KW-0862">Zinc</keyword>
<keyword id="KW-0863">Zinc-finger</keyword>
<organism>
    <name type="scientific">Mus musculus</name>
    <name type="common">Mouse</name>
    <dbReference type="NCBI Taxonomy" id="10090"/>
    <lineage>
        <taxon>Eukaryota</taxon>
        <taxon>Metazoa</taxon>
        <taxon>Chordata</taxon>
        <taxon>Craniata</taxon>
        <taxon>Vertebrata</taxon>
        <taxon>Euteleostomi</taxon>
        <taxon>Mammalia</taxon>
        <taxon>Eutheria</taxon>
        <taxon>Euarchontoglires</taxon>
        <taxon>Glires</taxon>
        <taxon>Rodentia</taxon>
        <taxon>Myomorpha</taxon>
        <taxon>Muroidea</taxon>
        <taxon>Muridae</taxon>
        <taxon>Murinae</taxon>
        <taxon>Mus</taxon>
        <taxon>Mus</taxon>
    </lineage>
</organism>
<reference key="1">
    <citation type="journal article" date="2001" name="Nat. Genet.">
        <title>An abundance of X-linked genes expressed in spermatogonia.</title>
        <authorList>
            <person name="Wang P.J."/>
            <person name="McCarrey J.R."/>
            <person name="Yang F."/>
            <person name="Page D.C."/>
        </authorList>
    </citation>
    <scope>NUCLEOTIDE SEQUENCE [MRNA] (ISOFORM 4)</scope>
    <source>
        <tissue>Testis</tissue>
    </source>
</reference>
<reference key="2">
    <citation type="journal article" date="2005" name="Development">
        <title>RNF17, a component of the mammalian germ cell nuage, is essential for spermiogenesis.</title>
        <authorList>
            <person name="Pan J."/>
            <person name="Goodheart M."/>
            <person name="Chuma S."/>
            <person name="Nakatsuji N."/>
            <person name="Page D.C."/>
            <person name="Wang P.J."/>
        </authorList>
    </citation>
    <scope>NUCLEOTIDE SEQUENCE [MRNA] (ISOFORMS 1 AND 2)</scope>
    <scope>SUBCELLULAR LOCATION</scope>
    <scope>SELF-ASSOCIATION</scope>
    <scope>TISSUE SPECIFICITY</scope>
    <scope>DISRUPTION PHENOTYPE</scope>
    <source>
        <tissue>Testis</tissue>
    </source>
</reference>
<reference key="3">
    <citation type="journal article" date="1999" name="Oncogene">
        <title>Mmip-2, a novel RING finger protein that interacts with mad members of the Myc oncoprotein network.</title>
        <authorList>
            <person name="Yin X.-Y."/>
            <person name="Gupta K."/>
            <person name="Prochownik E.V."/>
        </authorList>
    </citation>
    <scope>NUCLEOTIDE SEQUENCE [MRNA] OF 1-320</scope>
    <scope>FUNCTION</scope>
    <scope>INTERACTION WITH MXD1; MXD3; MXD4 AND MXI1</scope>
    <scope>SUBCELLULAR LOCATION</scope>
    <scope>TISSUE SPECIFICITY</scope>
</reference>
<reference key="4">
    <citation type="journal article" date="2005" name="Science">
        <title>The transcriptional landscape of the mammalian genome.</title>
        <authorList>
            <person name="Carninci P."/>
            <person name="Kasukawa T."/>
            <person name="Katayama S."/>
            <person name="Gough J."/>
            <person name="Frith M.C."/>
            <person name="Maeda N."/>
            <person name="Oyama R."/>
            <person name="Ravasi T."/>
            <person name="Lenhard B."/>
            <person name="Wells C."/>
            <person name="Kodzius R."/>
            <person name="Shimokawa K."/>
            <person name="Bajic V.B."/>
            <person name="Brenner S.E."/>
            <person name="Batalov S."/>
            <person name="Forrest A.R."/>
            <person name="Zavolan M."/>
            <person name="Davis M.J."/>
            <person name="Wilming L.G."/>
            <person name="Aidinis V."/>
            <person name="Allen J.E."/>
            <person name="Ambesi-Impiombato A."/>
            <person name="Apweiler R."/>
            <person name="Aturaliya R.N."/>
            <person name="Bailey T.L."/>
            <person name="Bansal M."/>
            <person name="Baxter L."/>
            <person name="Beisel K.W."/>
            <person name="Bersano T."/>
            <person name="Bono H."/>
            <person name="Chalk A.M."/>
            <person name="Chiu K.P."/>
            <person name="Choudhary V."/>
            <person name="Christoffels A."/>
            <person name="Clutterbuck D.R."/>
            <person name="Crowe M.L."/>
            <person name="Dalla E."/>
            <person name="Dalrymple B.P."/>
            <person name="de Bono B."/>
            <person name="Della Gatta G."/>
            <person name="di Bernardo D."/>
            <person name="Down T."/>
            <person name="Engstrom P."/>
            <person name="Fagiolini M."/>
            <person name="Faulkner G."/>
            <person name="Fletcher C.F."/>
            <person name="Fukushima T."/>
            <person name="Furuno M."/>
            <person name="Futaki S."/>
            <person name="Gariboldi M."/>
            <person name="Georgii-Hemming P."/>
            <person name="Gingeras T.R."/>
            <person name="Gojobori T."/>
            <person name="Green R.E."/>
            <person name="Gustincich S."/>
            <person name="Harbers M."/>
            <person name="Hayashi Y."/>
            <person name="Hensch T.K."/>
            <person name="Hirokawa N."/>
            <person name="Hill D."/>
            <person name="Huminiecki L."/>
            <person name="Iacono M."/>
            <person name="Ikeo K."/>
            <person name="Iwama A."/>
            <person name="Ishikawa T."/>
            <person name="Jakt M."/>
            <person name="Kanapin A."/>
            <person name="Katoh M."/>
            <person name="Kawasawa Y."/>
            <person name="Kelso J."/>
            <person name="Kitamura H."/>
            <person name="Kitano H."/>
            <person name="Kollias G."/>
            <person name="Krishnan S.P."/>
            <person name="Kruger A."/>
            <person name="Kummerfeld S.K."/>
            <person name="Kurochkin I.V."/>
            <person name="Lareau L.F."/>
            <person name="Lazarevic D."/>
            <person name="Lipovich L."/>
            <person name="Liu J."/>
            <person name="Liuni S."/>
            <person name="McWilliam S."/>
            <person name="Madan Babu M."/>
            <person name="Madera M."/>
            <person name="Marchionni L."/>
            <person name="Matsuda H."/>
            <person name="Matsuzawa S."/>
            <person name="Miki H."/>
            <person name="Mignone F."/>
            <person name="Miyake S."/>
            <person name="Morris K."/>
            <person name="Mottagui-Tabar S."/>
            <person name="Mulder N."/>
            <person name="Nakano N."/>
            <person name="Nakauchi H."/>
            <person name="Ng P."/>
            <person name="Nilsson R."/>
            <person name="Nishiguchi S."/>
            <person name="Nishikawa S."/>
            <person name="Nori F."/>
            <person name="Ohara O."/>
            <person name="Okazaki Y."/>
            <person name="Orlando V."/>
            <person name="Pang K.C."/>
            <person name="Pavan W.J."/>
            <person name="Pavesi G."/>
            <person name="Pesole G."/>
            <person name="Petrovsky N."/>
            <person name="Piazza S."/>
            <person name="Reed J."/>
            <person name="Reid J.F."/>
            <person name="Ring B.Z."/>
            <person name="Ringwald M."/>
            <person name="Rost B."/>
            <person name="Ruan Y."/>
            <person name="Salzberg S.L."/>
            <person name="Sandelin A."/>
            <person name="Schneider C."/>
            <person name="Schoenbach C."/>
            <person name="Sekiguchi K."/>
            <person name="Semple C.A."/>
            <person name="Seno S."/>
            <person name="Sessa L."/>
            <person name="Sheng Y."/>
            <person name="Shibata Y."/>
            <person name="Shimada H."/>
            <person name="Shimada K."/>
            <person name="Silva D."/>
            <person name="Sinclair B."/>
            <person name="Sperling S."/>
            <person name="Stupka E."/>
            <person name="Sugiura K."/>
            <person name="Sultana R."/>
            <person name="Takenaka Y."/>
            <person name="Taki K."/>
            <person name="Tammoja K."/>
            <person name="Tan S.L."/>
            <person name="Tang S."/>
            <person name="Taylor M.S."/>
            <person name="Tegner J."/>
            <person name="Teichmann S.A."/>
            <person name="Ueda H.R."/>
            <person name="van Nimwegen E."/>
            <person name="Verardo R."/>
            <person name="Wei C.L."/>
            <person name="Yagi K."/>
            <person name="Yamanishi H."/>
            <person name="Zabarovsky E."/>
            <person name="Zhu S."/>
            <person name="Zimmer A."/>
            <person name="Hide W."/>
            <person name="Bult C."/>
            <person name="Grimmond S.M."/>
            <person name="Teasdale R.D."/>
            <person name="Liu E.T."/>
            <person name="Brusic V."/>
            <person name="Quackenbush J."/>
            <person name="Wahlestedt C."/>
            <person name="Mattick J.S."/>
            <person name="Hume D.A."/>
            <person name="Kai C."/>
            <person name="Sasaki D."/>
            <person name="Tomaru Y."/>
            <person name="Fukuda S."/>
            <person name="Kanamori-Katayama M."/>
            <person name="Suzuki M."/>
            <person name="Aoki J."/>
            <person name="Arakawa T."/>
            <person name="Iida J."/>
            <person name="Imamura K."/>
            <person name="Itoh M."/>
            <person name="Kato T."/>
            <person name="Kawaji H."/>
            <person name="Kawagashira N."/>
            <person name="Kawashima T."/>
            <person name="Kojima M."/>
            <person name="Kondo S."/>
            <person name="Konno H."/>
            <person name="Nakano K."/>
            <person name="Ninomiya N."/>
            <person name="Nishio T."/>
            <person name="Okada M."/>
            <person name="Plessy C."/>
            <person name="Shibata K."/>
            <person name="Shiraki T."/>
            <person name="Suzuki S."/>
            <person name="Tagami M."/>
            <person name="Waki K."/>
            <person name="Watahiki A."/>
            <person name="Okamura-Oho Y."/>
            <person name="Suzuki H."/>
            <person name="Kawai J."/>
            <person name="Hayashizaki Y."/>
        </authorList>
    </citation>
    <scope>NUCLEOTIDE SEQUENCE [LARGE SCALE MRNA] OF 1-1122 (ISOFORM 3)</scope>
    <source>
        <strain>C57BL/6J</strain>
        <tissue>Testis</tissue>
    </source>
</reference>
<reference key="5">
    <citation type="journal article" date="2004" name="Genome Res.">
        <title>The status, quality, and expansion of the NIH full-length cDNA project: the Mammalian Gene Collection (MGC).</title>
        <authorList>
            <consortium name="The MGC Project Team"/>
        </authorList>
    </citation>
    <scope>NUCLEOTIDE SEQUENCE [LARGE SCALE MRNA] OF 962-1640 (ISOFORM 2)</scope>
    <source>
        <tissue>Oocyte</tissue>
    </source>
</reference>
<reference key="6">
    <citation type="journal article" date="2001" name="Oncogene">
        <title>Mmip-2/Rnf-17 enhances c-Myc function and regulates some target genes in common with glucocorticoid hormones.</title>
        <authorList>
            <person name="Yin X.Y."/>
            <person name="Grove L.E."/>
            <person name="Prochownik E.V."/>
        </authorList>
    </citation>
    <scope>FUNCTION</scope>
    <scope>SUBCELLULAR LOCATION</scope>
</reference>
<reference key="7">
    <citation type="journal article" date="2009" name="Genes Dev.">
        <title>Proteomic analysis of murine Piwi proteins reveals a role for arginine methylation in specifying interaction with Tudor family members.</title>
        <authorList>
            <person name="Vagin V.V."/>
            <person name="Wohlschlegel J."/>
            <person name="Qu J."/>
            <person name="Jonsson Z."/>
            <person name="Huang X."/>
            <person name="Chuma S."/>
            <person name="Girard A."/>
            <person name="Sachidanandam R."/>
            <person name="Hannon G.J."/>
            <person name="Aravin A.A."/>
        </authorList>
    </citation>
    <scope>INTERACTION WITH PIWIL1</scope>
</reference>
<reference key="8">
    <citation type="journal article" date="2010" name="Cell">
        <title>A tissue-specific atlas of mouse protein phosphorylation and expression.</title>
        <authorList>
            <person name="Huttlin E.L."/>
            <person name="Jedrychowski M.P."/>
            <person name="Elias J.E."/>
            <person name="Goswami T."/>
            <person name="Rad R."/>
            <person name="Beausoleil S.A."/>
            <person name="Villen J."/>
            <person name="Haas W."/>
            <person name="Sowa M.E."/>
            <person name="Gygi S.P."/>
        </authorList>
    </citation>
    <scope>PHOSPHORYLATION [LARGE SCALE ANALYSIS] AT SER-134</scope>
    <scope>IDENTIFICATION BY MASS SPECTROMETRY [LARGE SCALE ANALYSIS]</scope>
    <source>
        <tissue>Testis</tissue>
    </source>
</reference>
<reference key="9">
    <citation type="journal article" date="2013" name="Proc. Natl. Acad. Sci. U.S.A.">
        <title>Label-free quantitative proteomics of the lysine acetylome in mitochondria identifies substrates of SIRT3 in metabolic pathways.</title>
        <authorList>
            <person name="Rardin M.J."/>
            <person name="Newman J.C."/>
            <person name="Held J.M."/>
            <person name="Cusack M.P."/>
            <person name="Sorensen D.J."/>
            <person name="Li B."/>
            <person name="Schilling B."/>
            <person name="Mooney S.D."/>
            <person name="Kahn C.R."/>
            <person name="Verdin E."/>
            <person name="Gibson B.W."/>
        </authorList>
    </citation>
    <scope>ACETYLATION [LARGE SCALE ANALYSIS] AT LYS-229</scope>
    <scope>IDENTIFICATION BY MASS SPECTROMETRY [LARGE SCALE ANALYSIS]</scope>
    <source>
        <tissue>Liver</tissue>
    </source>
</reference>
<sequence length="1640" mass="185600">MAAEASSTGLASCHLVESKSGAQGASGCQCTRCGRKVSVASGDHHKFPCGHAFCELCLLAPQEYTTSKCTDCEVHTTVSMNQGHYPVDGFIEEDSSLEALPPKMVNNCSSDLEKTVDQLINDLEHSSSIHRNVSNPSAVMSETEEIDEALKIAGCNFEQLSNAIKMLDSTQDQTRQETHSLTEAVEKQFDTLLASLDSRKKSLCEELIRRTDDYLSKLVTVKSYIEEKKSDLDAAMKIAKELRSAPSLRTYCDLTQIIRTLKLTFESELSQVSSIIPRNTPRLDINCSEAICMFSSMGKIEFEDSTKCYPQENEDGQNVQKKFNNRKELCCDVYSSLEKKKVDAAVLTDETPEPPLQAEAPDRHLEGKKKQPTKEMVVVTSPKTIAVLPQLGSSPDVIIEEIIEENLESCFTDDPIETSGYPKKPPQKEQSAPVGSKAGCPELVFVSHVIHPCHFYVRKYSQIKDATILEKKMKQVCNRSLHLDPSDILELGARIFVNSIKNRMWCRGIITEIIPSKTKNIRKPCSPTKFSVCEISLIQIFMVDFGNSEVLIITGVGDTHEGPEHDGEQHITLSDFCLLLMKSEPYSEELLKDIPHLAHLCSLKDIVPYNSTEGWEKEAKVEFLKMVNKKAVLMKVFGEEDDVLIVDLQKPPTNKISSDMPVSLRDALVFMELARFRSQSPRSHSEKNTTLCYHPPILPEEMTEVSVMVCHINSPTDFYLQLMENLDFLSLLKTIEEFYKGEDGENLEILCPLQNQACVAKFEDGIWYRAKVIGLPGHREVEVKYVDFGNTAKITLKDMRKIKDEFLEPPEKAIKCKLAYVEPSKKSQWSKKAKEKFEEKTQDKFVTCSVIKILENNVLLVELFDSRAPGKSAVSINDQLVKEGLASYEAGYTLKDNSKKHLEVWDPSPEEIITSEINNLSPLSVKSLPNENFQSLYNKELPVNICNVISPEKIYVQWLLTENLLNSLEEKMVAAYEHSEWKPVKWECDMHCAVKVPAKNQWRRGQILRMVTDKLVEVLLYDVGVELVVNIHCLRELQENLKTMGRLSLECSLVDIRPTGGSDKWTATACDCLSLHLTGAIATIILQESNTTWPLPVKIFCRDEKGERVDVSKYLIKKGLALRERRVSKSSNSHSPEKSLEIPLEQGDSVVTKCFKINFDTNKKIADKVNEHKVPDSKGKKSESRSTGCYRPPAVPNTSSFEAIVTCIGDDGTIFVVPKLSEFELIKMMDEIQSNLKCLGLLEPYSWKKGEPCAVRGSDTLWYRGKVMEVVGGTIRVQYLDHGFTEKIPQCHLYPILLYPDTPQFCIPCQLYQTLPVGNTWQPDAIELLQELLSKREVDIHIMELPNNSWGKLSVHLYFDGMSLSHFMAHHKYCIFEHTEEIFKEKPRGQNKKYEDENWKIRFEDLLLPEMEAPVLPPYLSSLLPPPEELFAVQVKHIVSPDEMYICLDSEDSYTQFNHHGDTDDSGVSWESESENLEEALQRFNKNVETFPPLTDFSSEMPCLAEYADGLWYRAKIISIKEFNPLSVLVLFVDYGCTEKLTINRLRQIPVQLMQYPAQAIKVLLAGFKPPLSDSGKTRIPYCPKWSMEALWTMIDCLQGKQLYASSVAQAPEQIVTLYEDEQYPVHMSLVEMGLADKDE</sequence>